<protein>
    <recommendedName>
        <fullName>Terminase small subunit</fullName>
    </recommendedName>
    <alternativeName>
        <fullName>G1P</fullName>
    </alternativeName>
    <alternativeName>
        <fullName>Terminase, small subunit</fullName>
    </alternativeName>
</protein>
<reference key="1">
    <citation type="journal article" date="1994" name="Virology">
        <title>Analysis of the Bacillus subtilis bacteriophages SPP1 and SF6 gene 1 product: a protein involved in the initiation of headful packaging.</title>
        <authorList>
            <person name="Chai S."/>
            <person name="Kruft V."/>
            <person name="Alonso J.C."/>
        </authorList>
    </citation>
    <scope>NUCLEOTIDE SEQUENCE [GENOMIC DNA]</scope>
    <scope>PROTEIN SEQUENCE OF 1-10</scope>
</reference>
<reference key="2">
    <citation type="submission" date="2006-05" db="EMBL/GenBank/DDBJ databases">
        <title>The DNA-binding domain of bacteriophage SF6 small terminase subunit.</title>
        <authorList>
            <person name="Benini S."/>
            <person name="Chechik M."/>
            <person name="Ortiz-Lombardia M."/>
            <person name="Polier S."/>
            <person name="Shevtsov M.B."/>
            <person name="De Luchi D."/>
            <person name="Alonso J.C."/>
            <person name="Antson A.A."/>
        </authorList>
    </citation>
    <scope>NUCLEOTIDE SEQUENCE [GENOMIC DNA]</scope>
</reference>
<reference key="3">
    <citation type="journal article" date="2021" name="Virology">
        <title>The coevolution of large and small terminases of bacteriophages is a result of purifying selection leading to phenotypic stabilization.</title>
        <authorList>
            <person name="Wangchuk J."/>
            <person name="Chatterjee A."/>
            <person name="Patil S."/>
            <person name="Madugula S.K."/>
            <person name="Kondabagil K."/>
        </authorList>
    </citation>
    <scope>DOMAIN</scope>
</reference>
<reference evidence="7 8 9 10 11" key="4">
    <citation type="journal article" date="2012" name="Proc. Natl. Acad. Sci. U.S.A.">
        <title>Structural basis for DNA recognition and loading into a viral packaging motor.</title>
        <authorList>
            <person name="Buttner C.R."/>
            <person name="Chechik M."/>
            <person name="Ortiz-Lombardia M."/>
            <person name="Smits C."/>
            <person name="Ebong I.O."/>
            <person name="Chechik V."/>
            <person name="Jeschke G."/>
            <person name="Dykeman E."/>
            <person name="Benini S."/>
            <person name="Robinson C.V."/>
            <person name="Alonso J.C."/>
            <person name="Antson A.A."/>
        </authorList>
    </citation>
    <scope>X-RAY CRYSTALLOGRAPHY (1.68 ANGSTROMS) OF 53-120</scope>
    <scope>SUBUNIT</scope>
</reference>
<reference evidence="6" key="5">
    <citation type="journal article" date="2013" name="Acta Crystallogr. F">
        <title>The 1.58 A resolution structure of the DNA-binding domain of bacteriophage SF6 small terminase provides new hints on DNA binding.</title>
        <authorList>
            <person name="Benini S."/>
            <person name="Chechik M."/>
            <person name="Ortiz Lombardia M."/>
            <person name="Polier S."/>
            <person name="Leech A."/>
            <person name="Shevtsov M.B."/>
            <person name="Alonso J.C."/>
        </authorList>
    </citation>
    <scope>X-RAY CRYSTALLOGRAPHY (1.58 ANGSTROMS) OF 1-60</scope>
    <scope>DNA-BINDING</scope>
</reference>
<feature type="chain" id="PRO_0000077790" description="Terminase small subunit">
    <location>
        <begin position="1"/>
        <end position="145"/>
    </location>
</feature>
<feature type="region of interest" description="Helix-turn-helix (HTH)" evidence="2 3 5">
    <location>
        <begin position="8"/>
        <end position="46"/>
    </location>
</feature>
<feature type="region of interest" description="Oligomerization" evidence="2">
    <location>
        <begin position="53"/>
        <end position="120"/>
    </location>
</feature>
<feature type="helix" evidence="15">
    <location>
        <begin position="8"/>
        <end position="19"/>
    </location>
</feature>
<feature type="turn" evidence="15">
    <location>
        <begin position="20"/>
        <end position="22"/>
    </location>
</feature>
<feature type="helix" evidence="15">
    <location>
        <begin position="24"/>
        <end position="30"/>
    </location>
</feature>
<feature type="turn" evidence="15">
    <location>
        <begin position="35"/>
        <end position="37"/>
    </location>
</feature>
<feature type="helix" evidence="15">
    <location>
        <begin position="38"/>
        <end position="46"/>
    </location>
</feature>
<feature type="helix" evidence="15">
    <location>
        <begin position="49"/>
        <end position="61"/>
    </location>
</feature>
<feature type="strand" evidence="12">
    <location>
        <begin position="63"/>
        <end position="65"/>
    </location>
</feature>
<feature type="helix" evidence="13">
    <location>
        <begin position="70"/>
        <end position="81"/>
    </location>
</feature>
<feature type="strand" evidence="13">
    <location>
        <begin position="86"/>
        <end position="94"/>
    </location>
</feature>
<feature type="strand" evidence="13">
    <location>
        <begin position="97"/>
        <end position="104"/>
    </location>
</feature>
<feature type="helix" evidence="13">
    <location>
        <begin position="107"/>
        <end position="119"/>
    </location>
</feature>
<feature type="strand" evidence="14">
    <location>
        <begin position="125"/>
        <end position="139"/>
    </location>
</feature>
<organism>
    <name type="scientific">Bacillus phage SF6</name>
    <name type="common">Bacteriophage SF6</name>
    <dbReference type="NCBI Taxonomy" id="10773"/>
    <lineage>
        <taxon>Viruses</taxon>
        <taxon>Duplodnaviria</taxon>
        <taxon>Heunggongvirae</taxon>
        <taxon>Uroviricota</taxon>
        <taxon>Caudoviricetes</taxon>
    </lineage>
</organism>
<sequence>MKEPKLSPKQERFIEEYFINDMNATKAAIAAGYSKNSASAIGAENLQKPAIRARIDARLKEINEKKILQANEVLEHLTRIALGQEKEQVLMGIGKGAETKTHVEVSAKDRIKALELLGKAHAVFTDKQKVETNQVIIVDDSGDAE</sequence>
<comment type="function">
    <text evidence="1">The terminase small subunit specifically recognizes the non-adjacent pacL and pacR packaging subsites and regulates the ATPase activity of the terminase large subunit. The terminase lies at a unique vertex of the procapsid and is composed of two subunits, a small terminase subunit involved in viral DNA recognition (packaging 'pac' sequence), and a large terminase subunit possessing endonucleolytic and ATPase activities. Both terminase subunits heterooligomerize and are docked on the portal protein to form the packaging machine. The terminase large subunit exhibits endonuclease activity and cleaves the viral genome concatemer once the capsid is full (headful packaging). Once the capsid is packaged with the DNA, the terminase complex is substituted by neck proteins.</text>
</comment>
<comment type="subunit">
    <text evidence="2">Homononamer. Interacts with the terminase large subunit gp2; the active complex is probably composed of a one monomer of gp2 and two or more nonamers of gp1.</text>
</comment>
<comment type="interaction">
    <interactant intactId="EBI-15961372">
        <id>P68928</id>
    </interactant>
    <interactant intactId="EBI-15961372">
        <id>P68928</id>
        <label>1</label>
    </interactant>
    <organismsDiffer>false</organismsDiffer>
    <experiments>5</experiments>
</comment>
<comment type="domain">
    <text evidence="5">The N-terminus contains a helix-turn-helix (HTH) doamin that is involved in viral DNA binding.</text>
</comment>
<comment type="similarity">
    <text evidence="4">Belongs to the SPP1-like small terminase family.</text>
</comment>
<proteinExistence type="evidence at protein level"/>
<organismHost>
    <name type="scientific">Bacillus subtilis</name>
    <dbReference type="NCBI Taxonomy" id="1423"/>
</organismHost>
<name>TERS_BPSF6</name>
<gene>
    <name type="primary">1</name>
</gene>
<dbReference type="EMBL" id="X67297">
    <property type="protein sequence ID" value="CAA47711.1"/>
    <property type="status" value="ALT_SEQ"/>
    <property type="molecule type" value="Genomic_DNA"/>
</dbReference>
<dbReference type="EMBL" id="AM268240">
    <property type="protein sequence ID" value="CAK29441.1"/>
    <property type="molecule type" value="Genomic_DNA"/>
</dbReference>
<dbReference type="PDB" id="2CMP">
    <property type="method" value="X-ray"/>
    <property type="resolution" value="1.58 A"/>
    <property type="chains" value="A=1-60"/>
</dbReference>
<dbReference type="PDB" id="3ZQM">
    <property type="method" value="X-ray"/>
    <property type="resolution" value="1.85 A"/>
    <property type="chains" value="A/B/C/D/E/F/G/H/I/J=53-120"/>
</dbReference>
<dbReference type="PDB" id="3ZQN">
    <property type="method" value="X-ray"/>
    <property type="resolution" value="2.20 A"/>
    <property type="chains" value="A/B/C/D/E/F/G/H/I/J=53-120"/>
</dbReference>
<dbReference type="PDB" id="3ZQO">
    <property type="method" value="X-ray"/>
    <property type="resolution" value="1.68 A"/>
    <property type="chains" value="A/B/C/D/E/F/G/H/I/J/K/L/M/N/O/P/Q/R=53-120"/>
</dbReference>
<dbReference type="PDB" id="3ZQP">
    <property type="method" value="X-ray"/>
    <property type="resolution" value="3.00 A"/>
    <property type="chains" value="A/B/C/D/E/F/G/H/I=1-145"/>
</dbReference>
<dbReference type="PDB" id="3ZQQ">
    <property type="method" value="X-ray"/>
    <property type="resolution" value="4.00 A"/>
    <property type="chains" value="A/B/C=1-145"/>
</dbReference>
<dbReference type="PDB" id="4ZC3">
    <property type="method" value="X-ray"/>
    <property type="resolution" value="1.40 A"/>
    <property type="chains" value="A=1-68"/>
</dbReference>
<dbReference type="PDBsum" id="2CMP"/>
<dbReference type="PDBsum" id="3ZQM"/>
<dbReference type="PDBsum" id="3ZQN"/>
<dbReference type="PDBsum" id="3ZQO"/>
<dbReference type="PDBsum" id="3ZQP"/>
<dbReference type="PDBsum" id="3ZQQ"/>
<dbReference type="PDBsum" id="4ZC3"/>
<dbReference type="SMR" id="P68928"/>
<dbReference type="DIP" id="DIP-60005N"/>
<dbReference type="EvolutionaryTrace" id="P68928"/>
<dbReference type="GO" id="GO:0003677">
    <property type="term" value="F:DNA binding"/>
    <property type="evidence" value="ECO:0007669"/>
    <property type="project" value="UniProtKB-KW"/>
</dbReference>
<dbReference type="GO" id="GO:0042802">
    <property type="term" value="F:identical protein binding"/>
    <property type="evidence" value="ECO:0000353"/>
    <property type="project" value="IntAct"/>
</dbReference>
<dbReference type="GO" id="GO:0051276">
    <property type="term" value="P:chromosome organization"/>
    <property type="evidence" value="ECO:0007669"/>
    <property type="project" value="InterPro"/>
</dbReference>
<dbReference type="Gene3D" id="6.10.140.2160">
    <property type="match status" value="1"/>
</dbReference>
<dbReference type="Gene3D" id="1.10.10.1400">
    <property type="entry name" value="Terminase, small subunit, N-terminal DNA-binding domain, HTH motif"/>
    <property type="match status" value="1"/>
</dbReference>
<dbReference type="InterPro" id="IPR052404">
    <property type="entry name" value="SPP1-like_terminase"/>
</dbReference>
<dbReference type="InterPro" id="IPR038713">
    <property type="entry name" value="Terminase_Gp1_N_sf"/>
</dbReference>
<dbReference type="InterPro" id="IPR005335">
    <property type="entry name" value="Terminase_ssu"/>
</dbReference>
<dbReference type="PANTHER" id="PTHR41328:SF2">
    <property type="entry name" value="TERMINASE SMALL SUBUNIT"/>
    <property type="match status" value="1"/>
</dbReference>
<dbReference type="PANTHER" id="PTHR41328">
    <property type="entry name" value="TERMINASE SMALL SUBUNIT-RELATED"/>
    <property type="match status" value="1"/>
</dbReference>
<dbReference type="Pfam" id="PF03592">
    <property type="entry name" value="Terminase_2"/>
    <property type="match status" value="1"/>
</dbReference>
<accession>P68928</accession>
<accession>Q1EJR8</accession>
<accession>Q38627</accession>
<evidence type="ECO:0000250" key="1">
    <source>
        <dbReference type="UniProtKB" id="P54307"/>
    </source>
</evidence>
<evidence type="ECO:0000269" key="2">
    <source>
    </source>
</evidence>
<evidence type="ECO:0000269" key="3">
    <source>
    </source>
</evidence>
<evidence type="ECO:0000305" key="4"/>
<evidence type="ECO:0000305" key="5">
    <source>
    </source>
</evidence>
<evidence type="ECO:0007744" key="6">
    <source>
        <dbReference type="PDB" id="2CMP"/>
    </source>
</evidence>
<evidence type="ECO:0007744" key="7">
    <source>
        <dbReference type="PDB" id="3ZQM"/>
    </source>
</evidence>
<evidence type="ECO:0007744" key="8">
    <source>
        <dbReference type="PDB" id="3ZQN"/>
    </source>
</evidence>
<evidence type="ECO:0007744" key="9">
    <source>
        <dbReference type="PDB" id="3ZQO"/>
    </source>
</evidence>
<evidence type="ECO:0007744" key="10">
    <source>
        <dbReference type="PDB" id="3ZQP"/>
    </source>
</evidence>
<evidence type="ECO:0007744" key="11">
    <source>
        <dbReference type="PDB" id="3ZQQ"/>
    </source>
</evidence>
<evidence type="ECO:0007829" key="12">
    <source>
        <dbReference type="PDB" id="3ZQN"/>
    </source>
</evidence>
<evidence type="ECO:0007829" key="13">
    <source>
        <dbReference type="PDB" id="3ZQO"/>
    </source>
</evidence>
<evidence type="ECO:0007829" key="14">
    <source>
        <dbReference type="PDB" id="3ZQP"/>
    </source>
</evidence>
<evidence type="ECO:0007829" key="15">
    <source>
        <dbReference type="PDB" id="4ZC3"/>
    </source>
</evidence>
<keyword id="KW-0002">3D-structure</keyword>
<keyword id="KW-0903">Direct protein sequencing</keyword>
<keyword id="KW-0238">DNA-binding</keyword>
<keyword id="KW-0231">Viral genome packaging</keyword>
<keyword id="KW-1188">Viral release from host cell</keyword>